<feature type="chain" id="PRO_0000407268" description="N(2)-fixation sustaining protein CowN">
    <location>
        <begin position="1"/>
        <end position="92"/>
    </location>
</feature>
<evidence type="ECO:0000255" key="1">
    <source>
        <dbReference type="HAMAP-Rule" id="MF_02117"/>
    </source>
</evidence>
<sequence>MTAAFDRYVSFKNADWEGKSQRVMERLQIHIDAAQNPFWAYFAQKRTELNQKQGLDDLRVLHNYLPTLREILEDNGDQETLAMLEDLEVTCM</sequence>
<proteinExistence type="inferred from homology"/>
<reference key="1">
    <citation type="submission" date="2006-09" db="EMBL/GenBank/DDBJ databases">
        <title>Complete sequence of Rhodopseudomonas palustris BisA53.</title>
        <authorList>
            <consortium name="US DOE Joint Genome Institute"/>
            <person name="Copeland A."/>
            <person name="Lucas S."/>
            <person name="Lapidus A."/>
            <person name="Barry K."/>
            <person name="Detter J.C."/>
            <person name="Glavina del Rio T."/>
            <person name="Hammon N."/>
            <person name="Israni S."/>
            <person name="Dalin E."/>
            <person name="Tice H."/>
            <person name="Pitluck S."/>
            <person name="Chain P."/>
            <person name="Malfatti S."/>
            <person name="Shin M."/>
            <person name="Vergez L."/>
            <person name="Schmutz J."/>
            <person name="Larimer F."/>
            <person name="Land M."/>
            <person name="Hauser L."/>
            <person name="Pelletier D.A."/>
            <person name="Kyrpides N."/>
            <person name="Kim E."/>
            <person name="Harwood C.S."/>
            <person name="Oda Y."/>
            <person name="Richardson P."/>
        </authorList>
    </citation>
    <scope>NUCLEOTIDE SEQUENCE [LARGE SCALE GENOMIC DNA]</scope>
    <source>
        <strain>BisA53</strain>
    </source>
</reference>
<dbReference type="EMBL" id="CP000463">
    <property type="protein sequence ID" value="ABJ06204.1"/>
    <property type="molecule type" value="Genomic_DNA"/>
</dbReference>
<dbReference type="SMR" id="Q07PD0"/>
<dbReference type="STRING" id="316055.RPE_2262"/>
<dbReference type="KEGG" id="rpe:RPE_2262"/>
<dbReference type="eggNOG" id="ENOG5032TZQ">
    <property type="taxonomic scope" value="Bacteria"/>
</dbReference>
<dbReference type="HOGENOM" id="CLU_149349_0_0_5"/>
<dbReference type="OrthoDB" id="7689335at2"/>
<dbReference type="GO" id="GO:0009399">
    <property type="term" value="P:nitrogen fixation"/>
    <property type="evidence" value="ECO:0007669"/>
    <property type="project" value="UniProtKB-UniRule"/>
</dbReference>
<dbReference type="HAMAP" id="MF_02117">
    <property type="entry name" value="CowN"/>
    <property type="match status" value="1"/>
</dbReference>
<dbReference type="InterPro" id="IPR024899">
    <property type="entry name" value="CowN"/>
</dbReference>
<dbReference type="NCBIfam" id="NF033689">
    <property type="entry name" value="N2Fix_CO_CowN"/>
    <property type="match status" value="1"/>
</dbReference>
<dbReference type="Pfam" id="PF20543">
    <property type="entry name" value="CowN"/>
    <property type="match status" value="1"/>
</dbReference>
<organism>
    <name type="scientific">Rhodopseudomonas palustris (strain BisA53)</name>
    <dbReference type="NCBI Taxonomy" id="316055"/>
    <lineage>
        <taxon>Bacteria</taxon>
        <taxon>Pseudomonadati</taxon>
        <taxon>Pseudomonadota</taxon>
        <taxon>Alphaproteobacteria</taxon>
        <taxon>Hyphomicrobiales</taxon>
        <taxon>Nitrobacteraceae</taxon>
        <taxon>Rhodopseudomonas</taxon>
    </lineage>
</organism>
<gene>
    <name evidence="1" type="primary">cowN</name>
    <name type="ordered locus">RPE_2262</name>
</gene>
<comment type="function">
    <text evidence="1">Is required to sustain N(2)-dependent growth in the presence of low levels of carbon monoxide (CO). Probably acts by protecting the N(2) fixation ability of the nitrogenase complex, which is inactivated in the presence of CO.</text>
</comment>
<comment type="similarity">
    <text evidence="1">Belongs to the CowN family.</text>
</comment>
<accession>Q07PD0</accession>
<protein>
    <recommendedName>
        <fullName evidence="1">N(2)-fixation sustaining protein CowN</fullName>
    </recommendedName>
    <alternativeName>
        <fullName evidence="1">CO weal-nitrogenase</fullName>
    </alternativeName>
</protein>
<keyword id="KW-0535">Nitrogen fixation</keyword>
<name>COWN_RHOP5</name>